<accession>P0DJW3</accession>
<organism>
    <name type="scientific">Influenza A virus (strain A/USA:Iowa/1943 H1N1)</name>
    <dbReference type="NCBI Taxonomy" id="425563"/>
    <lineage>
        <taxon>Viruses</taxon>
        <taxon>Riboviria</taxon>
        <taxon>Orthornavirae</taxon>
        <taxon>Negarnaviricota</taxon>
        <taxon>Polyploviricotina</taxon>
        <taxon>Insthoviricetes</taxon>
        <taxon>Articulavirales</taxon>
        <taxon>Orthomyxoviridae</taxon>
        <taxon>Alphainfluenzavirus</taxon>
        <taxon>Alphainfluenzavirus influenzae</taxon>
        <taxon>Influenza A virus</taxon>
    </lineage>
</organism>
<feature type="chain" id="PRO_0000419426" description="Protein PA-X">
    <location>
        <begin position="1"/>
        <end position="252"/>
    </location>
</feature>
<feature type="region of interest" description="Disordered" evidence="6">
    <location>
        <begin position="202"/>
        <end position="221"/>
    </location>
</feature>
<feature type="compositionally biased region" description="Polar residues" evidence="6">
    <location>
        <begin position="208"/>
        <end position="217"/>
    </location>
</feature>
<feature type="active site" evidence="2">
    <location>
        <position position="80"/>
    </location>
</feature>
<feature type="active site" evidence="2">
    <location>
        <position position="108"/>
    </location>
</feature>
<feature type="site" description="Important for efficient shutoff activity" evidence="5">
    <location>
        <position position="28"/>
    </location>
</feature>
<feature type="site" description="Important for efficient shutoff activity" evidence="5">
    <location>
        <position position="65"/>
    </location>
</feature>
<feature type="site" description="Important for efficient shutoff activity and nuclear localization" evidence="4">
    <location>
        <position position="195"/>
    </location>
</feature>
<feature type="site" description="Important for efficient shutoff activity and nuclear localization" evidence="4">
    <location>
        <position position="198"/>
    </location>
</feature>
<feature type="site" description="Important for efficient shutoff activity and nuclear localization" evidence="4">
    <location>
        <position position="199"/>
    </location>
</feature>
<feature type="site" description="Important for efficient shutoff activity" evidence="3">
    <location>
        <position position="202"/>
    </location>
</feature>
<feature type="site" description="Important for efficient shutoff activity" evidence="3">
    <location>
        <position position="203"/>
    </location>
</feature>
<feature type="site" description="Important for efficient shutoff activity" evidence="3">
    <location>
        <position position="206"/>
    </location>
</feature>
<gene>
    <name type="primary">PA</name>
</gene>
<sequence>MEDFVRQCFNPMIVELAEKAMKEYGEDLKIETNKFAAICTHLEVCFMYSDFHFINEQGESIIVELGDPNALLKHRFEIIEGRDRTMAWTVVNSICNTTGAEKPKFLPDLYDYKENRFIEIGVTRREVHIYYLEKANKIKSEKTHIHIFSFTGEEMATKADYTLDEESRARIKTRLFTIRQEMASRGLWDSFVSPREAKRQLKKDLKSQEQCASSPTKVSRRTSPALKILEPMWMDSSRTATLRASFLKCPKK</sequence>
<organismHost>
    <name type="scientific">Aves</name>
    <dbReference type="NCBI Taxonomy" id="8782"/>
</organismHost>
<organismHost>
    <name type="scientific">Homo sapiens</name>
    <name type="common">Human</name>
    <dbReference type="NCBI Taxonomy" id="9606"/>
</organismHost>
<organismHost>
    <name type="scientific">Sus scrofa</name>
    <name type="common">Pig</name>
    <dbReference type="NCBI Taxonomy" id="9823"/>
</organismHost>
<protein>
    <recommendedName>
        <fullName>Protein PA-X</fullName>
    </recommendedName>
</protein>
<proteinExistence type="inferred from homology"/>
<keyword id="KW-1132">Decay of host mRNAs by virus</keyword>
<keyword id="KW-1262">Eukaryotic host gene expression shutoff by virus</keyword>
<keyword id="KW-1035">Host cytoplasm</keyword>
<keyword id="KW-1190">Host gene expression shutoff by virus</keyword>
<keyword id="KW-1192">Host mRNA suppression by virus</keyword>
<keyword id="KW-1048">Host nucleus</keyword>
<keyword id="KW-0945">Host-virus interaction</keyword>
<keyword id="KW-0688">Ribosomal frameshifting</keyword>
<comment type="function">
    <text evidence="1 4">Plays a major role in the shutoff of the host protein expression by cleaving mRNAs probably via an endonuclease activity. This host shutoff allows the virus to escape from the host antiviral response (By similarity). Hijacks host RNA splicing machinery to selectively target host RNAs containing introns for destruction. This may explain the preferential degradation of RNAs that have undergone co- or post-transcriptional processing (By similarity).</text>
</comment>
<comment type="subcellular location">
    <subcellularLocation>
        <location evidence="4">Host cytoplasm</location>
    </subcellularLocation>
    <subcellularLocation>
        <location evidence="4">Host nucleus</location>
    </subcellularLocation>
</comment>
<comment type="alternative products">
    <event type="ribosomal frameshifting"/>
    <isoform>
        <id>P0DJW3-1</id>
        <name>PA-X</name>
        <sequence type="displayed"/>
    </isoform>
    <isoform>
        <id>A4GCL5-1</id>
        <name>PA</name>
        <sequence type="external"/>
    </isoform>
</comment>
<comment type="domain">
    <text evidence="1 4">The probable endonuclease active site in the N-terminus and the basic amino acid cluster in the C-terminus are important for the shutoff activity. The C-terminus acts as a nuclear localization signal (By similarity). The C-terminus is recruited to host protein complexes involved in nuclear Pol II RNA processing (By similarity).</text>
</comment>
<comment type="similarity">
    <text evidence="7">Belongs to the influenza viruses PA-X family.</text>
</comment>
<name>PAX_I43A0</name>
<reference key="1">
    <citation type="submission" date="2007-03" db="EMBL/GenBank/DDBJ databases">
        <title>The NIAID influenza genome sequencing project.</title>
        <authorList>
            <person name="Ghedin E."/>
            <person name="Spiro D."/>
            <person name="Miller N."/>
            <person name="Zaborsky J."/>
            <person name="Feldblyum T."/>
            <person name="Subbu V."/>
            <person name="Shumway M."/>
            <person name="Sparenborg J."/>
            <person name="Groveman L."/>
            <person name="Halpin R."/>
            <person name="Sitz J."/>
            <person name="Koo H."/>
            <person name="Salzberg S.L."/>
            <person name="Webster R.G."/>
            <person name="Hoffmann E."/>
            <person name="Krauss S."/>
            <person name="Naeve C."/>
            <person name="Bao Y."/>
            <person name="Bolotov P."/>
            <person name="Dernovoy D."/>
            <person name="Kiryutin B."/>
            <person name="Lipman D.J."/>
            <person name="Tatusova T."/>
        </authorList>
    </citation>
    <scope>NUCLEOTIDE SEQUENCE [GENOMIC RNA]</scope>
</reference>
<reference key="2">
    <citation type="submission" date="2007-03" db="EMBL/GenBank/DDBJ databases">
        <authorList>
            <consortium name="The NIAID Influenza Genome Sequencing Consortium"/>
        </authorList>
    </citation>
    <scope>NUCLEOTIDE SEQUENCE [GENOMIC RNA]</scope>
</reference>
<evidence type="ECO:0000250" key="1">
    <source>
        <dbReference type="UniProtKB" id="P0CK64"/>
    </source>
</evidence>
<evidence type="ECO:0000250" key="2">
    <source>
        <dbReference type="UniProtKB" id="P0CK68"/>
    </source>
</evidence>
<evidence type="ECO:0000250" key="3">
    <source>
        <dbReference type="UniProtKB" id="P0DJW8"/>
    </source>
</evidence>
<evidence type="ECO:0000250" key="4">
    <source>
        <dbReference type="UniProtKB" id="P0DXO5"/>
    </source>
</evidence>
<evidence type="ECO:0000250" key="5">
    <source>
        <dbReference type="UniProtKB" id="P0DXO6"/>
    </source>
</evidence>
<evidence type="ECO:0000256" key="6">
    <source>
        <dbReference type="SAM" id="MobiDB-lite"/>
    </source>
</evidence>
<evidence type="ECO:0000305" key="7"/>
<dbReference type="EMBL" id="CY020466">
    <property type="status" value="NOT_ANNOTATED_CDS"/>
    <property type="molecule type" value="Viral_cRNA"/>
</dbReference>
<dbReference type="SMR" id="P0DJW3"/>
<dbReference type="Proteomes" id="UP000008432">
    <property type="component" value="Genome"/>
</dbReference>
<dbReference type="GO" id="GO:0003723">
    <property type="term" value="F:RNA binding"/>
    <property type="evidence" value="ECO:0007669"/>
    <property type="project" value="InterPro"/>
</dbReference>
<dbReference type="GO" id="GO:0039694">
    <property type="term" value="P:viral RNA genome replication"/>
    <property type="evidence" value="ECO:0007669"/>
    <property type="project" value="InterPro"/>
</dbReference>
<dbReference type="GO" id="GO:0075523">
    <property type="term" value="P:viral translational frameshifting"/>
    <property type="evidence" value="ECO:0007669"/>
    <property type="project" value="UniProtKB-KW"/>
</dbReference>
<dbReference type="FunFam" id="3.40.91.90:FF:000001">
    <property type="entry name" value="Polymerase acidic protein"/>
    <property type="match status" value="1"/>
</dbReference>
<dbReference type="Gene3D" id="3.40.91.90">
    <property type="entry name" value="Influenza RNA-dependent RNA polymerase subunit PA, endonuclease domain"/>
    <property type="match status" value="1"/>
</dbReference>
<dbReference type="InterPro" id="IPR001009">
    <property type="entry name" value="PA/PA-X"/>
</dbReference>
<dbReference type="InterPro" id="IPR038372">
    <property type="entry name" value="PA/PA-X_sf"/>
</dbReference>
<dbReference type="Pfam" id="PF00603">
    <property type="entry name" value="Flu_PA"/>
    <property type="match status" value="1"/>
</dbReference>